<dbReference type="EMBL" id="AP007255">
    <property type="protein sequence ID" value="BAE52434.1"/>
    <property type="molecule type" value="Genomic_DNA"/>
</dbReference>
<dbReference type="RefSeq" id="WP_011385988.1">
    <property type="nucleotide sequence ID" value="NC_007626.1"/>
</dbReference>
<dbReference type="SMR" id="Q2W141"/>
<dbReference type="STRING" id="342108.amb3630"/>
<dbReference type="KEGG" id="mag:amb3630"/>
<dbReference type="HOGENOM" id="CLU_099839_1_0_5"/>
<dbReference type="OrthoDB" id="9801447at2"/>
<dbReference type="Proteomes" id="UP000007058">
    <property type="component" value="Chromosome"/>
</dbReference>
<dbReference type="GO" id="GO:0005829">
    <property type="term" value="C:cytosol"/>
    <property type="evidence" value="ECO:0007669"/>
    <property type="project" value="TreeGrafter"/>
</dbReference>
<dbReference type="GO" id="GO:0000166">
    <property type="term" value="F:nucleotide binding"/>
    <property type="evidence" value="ECO:0007669"/>
    <property type="project" value="TreeGrafter"/>
</dbReference>
<dbReference type="CDD" id="cd11740">
    <property type="entry name" value="YajQ_like"/>
    <property type="match status" value="1"/>
</dbReference>
<dbReference type="Gene3D" id="3.30.70.860">
    <property type="match status" value="1"/>
</dbReference>
<dbReference type="Gene3D" id="3.30.70.990">
    <property type="entry name" value="YajQ-like, domain 2"/>
    <property type="match status" value="1"/>
</dbReference>
<dbReference type="HAMAP" id="MF_00632">
    <property type="entry name" value="YajQ"/>
    <property type="match status" value="1"/>
</dbReference>
<dbReference type="InterPro" id="IPR007551">
    <property type="entry name" value="DUF520"/>
</dbReference>
<dbReference type="InterPro" id="IPR035571">
    <property type="entry name" value="UPF0234-like_C"/>
</dbReference>
<dbReference type="InterPro" id="IPR035570">
    <property type="entry name" value="UPF0234_N"/>
</dbReference>
<dbReference type="InterPro" id="IPR036183">
    <property type="entry name" value="YajQ-like_sf"/>
</dbReference>
<dbReference type="NCBIfam" id="NF003819">
    <property type="entry name" value="PRK05412.1"/>
    <property type="match status" value="1"/>
</dbReference>
<dbReference type="PANTHER" id="PTHR30476">
    <property type="entry name" value="UPF0234 PROTEIN YAJQ"/>
    <property type="match status" value="1"/>
</dbReference>
<dbReference type="PANTHER" id="PTHR30476:SF0">
    <property type="entry name" value="UPF0234 PROTEIN YAJQ"/>
    <property type="match status" value="1"/>
</dbReference>
<dbReference type="Pfam" id="PF04461">
    <property type="entry name" value="DUF520"/>
    <property type="match status" value="1"/>
</dbReference>
<dbReference type="SUPFAM" id="SSF89963">
    <property type="entry name" value="YajQ-like"/>
    <property type="match status" value="2"/>
</dbReference>
<evidence type="ECO:0000255" key="1">
    <source>
        <dbReference type="HAMAP-Rule" id="MF_00632"/>
    </source>
</evidence>
<protein>
    <recommendedName>
        <fullName evidence="1">Nucleotide-binding protein amb3630</fullName>
    </recommendedName>
</protein>
<reference key="1">
    <citation type="journal article" date="2005" name="DNA Res.">
        <title>Complete genome sequence of the facultative anaerobic magnetotactic bacterium Magnetospirillum sp. strain AMB-1.</title>
        <authorList>
            <person name="Matsunaga T."/>
            <person name="Okamura Y."/>
            <person name="Fukuda Y."/>
            <person name="Wahyudi A.T."/>
            <person name="Murase Y."/>
            <person name="Takeyama H."/>
        </authorList>
    </citation>
    <scope>NUCLEOTIDE SEQUENCE [LARGE SCALE GENOMIC DNA]</scope>
    <source>
        <strain>ATCC 700264 / AMB-1</strain>
    </source>
</reference>
<feature type="chain" id="PRO_0000261947" description="Nucleotide-binding protein amb3630">
    <location>
        <begin position="1"/>
        <end position="161"/>
    </location>
</feature>
<accession>Q2W141</accession>
<comment type="function">
    <text evidence="1">Nucleotide-binding protein.</text>
</comment>
<comment type="similarity">
    <text evidence="1">Belongs to the YajQ family.</text>
</comment>
<proteinExistence type="inferred from homology"/>
<keyword id="KW-0547">Nucleotide-binding</keyword>
<name>Y3630_PARM1</name>
<gene>
    <name type="ordered locus">amb3630</name>
</gene>
<organism>
    <name type="scientific">Paramagnetospirillum magneticum (strain ATCC 700264 / AMB-1)</name>
    <name type="common">Magnetospirillum magneticum</name>
    <dbReference type="NCBI Taxonomy" id="342108"/>
    <lineage>
        <taxon>Bacteria</taxon>
        <taxon>Pseudomonadati</taxon>
        <taxon>Pseudomonadota</taxon>
        <taxon>Alphaproteobacteria</taxon>
        <taxon>Rhodospirillales</taxon>
        <taxon>Magnetospirillaceae</taxon>
        <taxon>Paramagnetospirillum</taxon>
    </lineage>
</organism>
<sequence>MPSFDVVSKTDLAEVDNALAGITREVAQRFDFKGSKCSVERKDQMITVLADDDSKLKTMHELLSVHFTRRKVDPKALDYKTVEKASGNTVRQEVRIKDGVETVLAKRLVKEIKDAKLKVQVAIQGDELRVTGKKRDDLQEAIALLRKLDVDQPLQYINFRD</sequence>